<sequence>MSQVFKVAVLPGDGIGPEVMAEALRVLDAIEKKYDVKFERTHANVGGAGIDLEGKALPETTITICKTSDAILFGSVGGPKWETLPPDEQPERGALLPLRKIFGLYANLRPAIIFPSLTGASSLKEEVIAGGFNVLVIRELTGGIYFAQPKGIEGEGRDRVGFDTMRYSVPEIERITHVAFQAARKRGKKVCSIDKANVLSSSVLWREVVTGIAKEYPDVELSHMYVDNAAMQLVRWPKQFDVILCENMFGDILSDEAAMLTGSLGMLPSASLAEGTFGMYEPSGGSAPDIAGQGIANPIAQILSMGMMLRFSFGMVDAADAIDNAVAKVLDQGCRTRDIFQEKPGEKLVNTKEMGDAIIVAL</sequence>
<keyword id="KW-0028">Amino-acid biosynthesis</keyword>
<keyword id="KW-0100">Branched-chain amino acid biosynthesis</keyword>
<keyword id="KW-0963">Cytoplasm</keyword>
<keyword id="KW-0432">Leucine biosynthesis</keyword>
<keyword id="KW-0460">Magnesium</keyword>
<keyword id="KW-0464">Manganese</keyword>
<keyword id="KW-0479">Metal-binding</keyword>
<keyword id="KW-0520">NAD</keyword>
<keyword id="KW-0560">Oxidoreductase</keyword>
<keyword id="KW-1185">Reference proteome</keyword>
<accession>Q39Y29</accession>
<evidence type="ECO:0000255" key="1">
    <source>
        <dbReference type="HAMAP-Rule" id="MF_01033"/>
    </source>
</evidence>
<dbReference type="EC" id="1.1.1.85" evidence="1"/>
<dbReference type="EMBL" id="CP000148">
    <property type="protein sequence ID" value="ABB30845.1"/>
    <property type="molecule type" value="Genomic_DNA"/>
</dbReference>
<dbReference type="RefSeq" id="WP_004514732.1">
    <property type="nucleotide sequence ID" value="NC_007517.1"/>
</dbReference>
<dbReference type="SMR" id="Q39Y29"/>
<dbReference type="STRING" id="269799.Gmet_0602"/>
<dbReference type="KEGG" id="gme:Gmet_0602"/>
<dbReference type="eggNOG" id="COG0473">
    <property type="taxonomic scope" value="Bacteria"/>
</dbReference>
<dbReference type="HOGENOM" id="CLU_031953_0_3_7"/>
<dbReference type="UniPathway" id="UPA00048">
    <property type="reaction ID" value="UER00072"/>
</dbReference>
<dbReference type="Proteomes" id="UP000007073">
    <property type="component" value="Chromosome"/>
</dbReference>
<dbReference type="GO" id="GO:0005829">
    <property type="term" value="C:cytosol"/>
    <property type="evidence" value="ECO:0007669"/>
    <property type="project" value="TreeGrafter"/>
</dbReference>
<dbReference type="GO" id="GO:0003862">
    <property type="term" value="F:3-isopropylmalate dehydrogenase activity"/>
    <property type="evidence" value="ECO:0007669"/>
    <property type="project" value="UniProtKB-UniRule"/>
</dbReference>
<dbReference type="GO" id="GO:0000287">
    <property type="term" value="F:magnesium ion binding"/>
    <property type="evidence" value="ECO:0007669"/>
    <property type="project" value="InterPro"/>
</dbReference>
<dbReference type="GO" id="GO:0051287">
    <property type="term" value="F:NAD binding"/>
    <property type="evidence" value="ECO:0007669"/>
    <property type="project" value="InterPro"/>
</dbReference>
<dbReference type="GO" id="GO:0009098">
    <property type="term" value="P:L-leucine biosynthetic process"/>
    <property type="evidence" value="ECO:0007669"/>
    <property type="project" value="UniProtKB-UniRule"/>
</dbReference>
<dbReference type="FunFam" id="3.40.718.10:FF:000004">
    <property type="entry name" value="3-isopropylmalate dehydrogenase"/>
    <property type="match status" value="1"/>
</dbReference>
<dbReference type="Gene3D" id="3.40.718.10">
    <property type="entry name" value="Isopropylmalate Dehydrogenase"/>
    <property type="match status" value="1"/>
</dbReference>
<dbReference type="HAMAP" id="MF_01033">
    <property type="entry name" value="LeuB_type1"/>
    <property type="match status" value="1"/>
</dbReference>
<dbReference type="InterPro" id="IPR019818">
    <property type="entry name" value="IsoCit/isopropylmalate_DH_CS"/>
</dbReference>
<dbReference type="InterPro" id="IPR024084">
    <property type="entry name" value="IsoPropMal-DH-like_dom"/>
</dbReference>
<dbReference type="InterPro" id="IPR004429">
    <property type="entry name" value="Isopropylmalate_DH"/>
</dbReference>
<dbReference type="NCBIfam" id="TIGR00169">
    <property type="entry name" value="leuB"/>
    <property type="match status" value="1"/>
</dbReference>
<dbReference type="PANTHER" id="PTHR42979">
    <property type="entry name" value="3-ISOPROPYLMALATE DEHYDROGENASE"/>
    <property type="match status" value="1"/>
</dbReference>
<dbReference type="PANTHER" id="PTHR42979:SF1">
    <property type="entry name" value="3-ISOPROPYLMALATE DEHYDROGENASE"/>
    <property type="match status" value="1"/>
</dbReference>
<dbReference type="Pfam" id="PF00180">
    <property type="entry name" value="Iso_dh"/>
    <property type="match status" value="1"/>
</dbReference>
<dbReference type="SMART" id="SM01329">
    <property type="entry name" value="Iso_dh"/>
    <property type="match status" value="1"/>
</dbReference>
<dbReference type="SUPFAM" id="SSF53659">
    <property type="entry name" value="Isocitrate/Isopropylmalate dehydrogenase-like"/>
    <property type="match status" value="1"/>
</dbReference>
<dbReference type="PROSITE" id="PS00470">
    <property type="entry name" value="IDH_IMDH"/>
    <property type="match status" value="1"/>
</dbReference>
<gene>
    <name evidence="1" type="primary">leuB</name>
    <name type="ordered locus">Gmet_0602</name>
</gene>
<protein>
    <recommendedName>
        <fullName evidence="1">3-isopropylmalate dehydrogenase</fullName>
        <ecNumber evidence="1">1.1.1.85</ecNumber>
    </recommendedName>
    <alternativeName>
        <fullName evidence="1">3-IPM-DH</fullName>
    </alternativeName>
    <alternativeName>
        <fullName evidence="1">Beta-IPM dehydrogenase</fullName>
        <shortName evidence="1">IMDH</shortName>
    </alternativeName>
</protein>
<name>LEU3_GEOMG</name>
<comment type="function">
    <text evidence="1">Catalyzes the oxidation of 3-carboxy-2-hydroxy-4-methylpentanoate (3-isopropylmalate) to 3-carboxy-4-methyl-2-oxopentanoate. The product decarboxylates to 4-methyl-2 oxopentanoate.</text>
</comment>
<comment type="catalytic activity">
    <reaction evidence="1">
        <text>(2R,3S)-3-isopropylmalate + NAD(+) = 4-methyl-2-oxopentanoate + CO2 + NADH</text>
        <dbReference type="Rhea" id="RHEA:32271"/>
        <dbReference type="ChEBI" id="CHEBI:16526"/>
        <dbReference type="ChEBI" id="CHEBI:17865"/>
        <dbReference type="ChEBI" id="CHEBI:35121"/>
        <dbReference type="ChEBI" id="CHEBI:57540"/>
        <dbReference type="ChEBI" id="CHEBI:57945"/>
        <dbReference type="EC" id="1.1.1.85"/>
    </reaction>
</comment>
<comment type="cofactor">
    <cofactor evidence="1">
        <name>Mg(2+)</name>
        <dbReference type="ChEBI" id="CHEBI:18420"/>
    </cofactor>
    <cofactor evidence="1">
        <name>Mn(2+)</name>
        <dbReference type="ChEBI" id="CHEBI:29035"/>
    </cofactor>
    <text evidence="1">Binds 1 Mg(2+) or Mn(2+) ion per subunit.</text>
</comment>
<comment type="pathway">
    <text evidence="1">Amino-acid biosynthesis; L-leucine biosynthesis; L-leucine from 3-methyl-2-oxobutanoate: step 3/4.</text>
</comment>
<comment type="subunit">
    <text evidence="1">Homodimer.</text>
</comment>
<comment type="subcellular location">
    <subcellularLocation>
        <location evidence="1">Cytoplasm</location>
    </subcellularLocation>
</comment>
<comment type="similarity">
    <text evidence="1">Belongs to the isocitrate and isopropylmalate dehydrogenases family. LeuB type 1 subfamily.</text>
</comment>
<reference key="1">
    <citation type="journal article" date="2009" name="BMC Microbiol.">
        <title>The genome sequence of Geobacter metallireducens: features of metabolism, physiology and regulation common and dissimilar to Geobacter sulfurreducens.</title>
        <authorList>
            <person name="Aklujkar M."/>
            <person name="Krushkal J."/>
            <person name="DiBartolo G."/>
            <person name="Lapidus A."/>
            <person name="Land M.L."/>
            <person name="Lovley D.R."/>
        </authorList>
    </citation>
    <scope>NUCLEOTIDE SEQUENCE [LARGE SCALE GENOMIC DNA]</scope>
    <source>
        <strain>ATCC 53774 / DSM 7210 / GS-15</strain>
    </source>
</reference>
<proteinExistence type="inferred from homology"/>
<feature type="chain" id="PRO_0000250117" description="3-isopropylmalate dehydrogenase">
    <location>
        <begin position="1"/>
        <end position="362"/>
    </location>
</feature>
<feature type="binding site" evidence="1">
    <location>
        <begin position="78"/>
        <end position="91"/>
    </location>
    <ligand>
        <name>NAD(+)</name>
        <dbReference type="ChEBI" id="CHEBI:57540"/>
    </ligand>
</feature>
<feature type="binding site" evidence="1">
    <location>
        <position position="99"/>
    </location>
    <ligand>
        <name>substrate</name>
    </ligand>
</feature>
<feature type="binding site" evidence="1">
    <location>
        <position position="109"/>
    </location>
    <ligand>
        <name>substrate</name>
    </ligand>
</feature>
<feature type="binding site" evidence="1">
    <location>
        <position position="138"/>
    </location>
    <ligand>
        <name>substrate</name>
    </ligand>
</feature>
<feature type="binding site" evidence="1">
    <location>
        <position position="227"/>
    </location>
    <ligand>
        <name>Mg(2+)</name>
        <dbReference type="ChEBI" id="CHEBI:18420"/>
    </ligand>
</feature>
<feature type="binding site" evidence="1">
    <location>
        <position position="227"/>
    </location>
    <ligand>
        <name>substrate</name>
    </ligand>
</feature>
<feature type="binding site" evidence="1">
    <location>
        <position position="251"/>
    </location>
    <ligand>
        <name>Mg(2+)</name>
        <dbReference type="ChEBI" id="CHEBI:18420"/>
    </ligand>
</feature>
<feature type="binding site" evidence="1">
    <location>
        <position position="255"/>
    </location>
    <ligand>
        <name>Mg(2+)</name>
        <dbReference type="ChEBI" id="CHEBI:18420"/>
    </ligand>
</feature>
<feature type="binding site" evidence="1">
    <location>
        <begin position="285"/>
        <end position="297"/>
    </location>
    <ligand>
        <name>NAD(+)</name>
        <dbReference type="ChEBI" id="CHEBI:57540"/>
    </ligand>
</feature>
<feature type="site" description="Important for catalysis" evidence="1">
    <location>
        <position position="145"/>
    </location>
</feature>
<feature type="site" description="Important for catalysis" evidence="1">
    <location>
        <position position="195"/>
    </location>
</feature>
<organism>
    <name type="scientific">Geobacter metallireducens (strain ATCC 53774 / DSM 7210 / GS-15)</name>
    <dbReference type="NCBI Taxonomy" id="269799"/>
    <lineage>
        <taxon>Bacteria</taxon>
        <taxon>Pseudomonadati</taxon>
        <taxon>Thermodesulfobacteriota</taxon>
        <taxon>Desulfuromonadia</taxon>
        <taxon>Geobacterales</taxon>
        <taxon>Geobacteraceae</taxon>
        <taxon>Geobacter</taxon>
    </lineage>
</organism>